<protein>
    <recommendedName>
        <fullName>Putative pentatricopeptide repeat-containing protein At5g09950</fullName>
    </recommendedName>
</protein>
<feature type="chain" id="PRO_0000363510" description="Putative pentatricopeptide repeat-containing protein At5g09950">
    <location>
        <begin position="1"/>
        <end position="995"/>
    </location>
</feature>
<feature type="repeat" description="PPR 1">
    <location>
        <begin position="35"/>
        <end position="65"/>
    </location>
</feature>
<feature type="repeat" description="PPR 2">
    <location>
        <begin position="66"/>
        <end position="100"/>
    </location>
</feature>
<feature type="repeat" description="PPR 3">
    <location>
        <begin position="101"/>
        <end position="137"/>
    </location>
</feature>
<feature type="repeat" description="PPR 4">
    <location>
        <begin position="138"/>
        <end position="169"/>
    </location>
</feature>
<feature type="repeat" description="PPR 5">
    <location>
        <begin position="170"/>
        <end position="204"/>
    </location>
</feature>
<feature type="repeat" description="PPR 6">
    <location>
        <begin position="205"/>
        <end position="241"/>
    </location>
</feature>
<feature type="repeat" description="PPR 7">
    <location>
        <begin position="242"/>
        <end position="276"/>
    </location>
</feature>
<feature type="repeat" description="PPR 8">
    <location>
        <begin position="278"/>
        <end position="303"/>
    </location>
</feature>
<feature type="repeat" description="PPR 9">
    <location>
        <begin position="307"/>
        <end position="342"/>
    </location>
</feature>
<feature type="repeat" description="PPR 10">
    <location>
        <begin position="348"/>
        <end position="378"/>
    </location>
</feature>
<feature type="repeat" description="PPR 11">
    <location>
        <begin position="379"/>
        <end position="413"/>
    </location>
</feature>
<feature type="repeat" description="PPR 12">
    <location>
        <begin position="414"/>
        <end position="448"/>
    </location>
</feature>
<feature type="repeat" description="PPR 13">
    <location>
        <begin position="449"/>
        <end position="483"/>
    </location>
</feature>
<feature type="repeat" description="PPR 14">
    <location>
        <begin position="484"/>
        <end position="515"/>
    </location>
</feature>
<feature type="repeat" description="PPR 15">
    <location>
        <begin position="516"/>
        <end position="550"/>
    </location>
</feature>
<feature type="repeat" description="PPR 16">
    <location>
        <begin position="551"/>
        <end position="581"/>
    </location>
</feature>
<feature type="repeat" description="PPR 17">
    <location>
        <begin position="583"/>
        <end position="617"/>
    </location>
</feature>
<feature type="repeat" description="PPR 18">
    <location>
        <begin position="618"/>
        <end position="652"/>
    </location>
</feature>
<feature type="repeat" description="PPR 19">
    <location>
        <begin position="653"/>
        <end position="683"/>
    </location>
</feature>
<feature type="repeat" description="PPR 20">
    <location>
        <begin position="684"/>
        <end position="718"/>
    </location>
</feature>
<feature type="repeat" description="PPR 21">
    <location>
        <begin position="720"/>
        <end position="750"/>
    </location>
</feature>
<feature type="repeat" description="PPR 22">
    <location>
        <begin position="756"/>
        <end position="786"/>
    </location>
</feature>
<feature type="region of interest" description="Type E motif">
    <location>
        <begin position="791"/>
        <end position="868"/>
    </location>
</feature>
<feature type="region of interest" description="Type E(+) motif">
    <location>
        <begin position="869"/>
        <end position="899"/>
    </location>
</feature>
<feature type="region of interest" description="Type DYW motif">
    <location>
        <begin position="900"/>
        <end position="995"/>
    </location>
</feature>
<gene>
    <name type="primary">PCMP-H35</name>
    <name type="ordered locus">At5g09950</name>
    <name type="ORF">MYH9.16</name>
</gene>
<name>PP373_ARATH</name>
<proteinExistence type="inferred from homology"/>
<organism>
    <name type="scientific">Arabidopsis thaliana</name>
    <name type="common">Mouse-ear cress</name>
    <dbReference type="NCBI Taxonomy" id="3702"/>
    <lineage>
        <taxon>Eukaryota</taxon>
        <taxon>Viridiplantae</taxon>
        <taxon>Streptophyta</taxon>
        <taxon>Embryophyta</taxon>
        <taxon>Tracheophyta</taxon>
        <taxon>Spermatophyta</taxon>
        <taxon>Magnoliopsida</taxon>
        <taxon>eudicotyledons</taxon>
        <taxon>Gunneridae</taxon>
        <taxon>Pentapetalae</taxon>
        <taxon>rosids</taxon>
        <taxon>malvids</taxon>
        <taxon>Brassicales</taxon>
        <taxon>Brassicaceae</taxon>
        <taxon>Camelineae</taxon>
        <taxon>Arabidopsis</taxon>
    </lineage>
</organism>
<accession>Q9FIB2</accession>
<evidence type="ECO:0000305" key="1"/>
<dbReference type="EMBL" id="AB016893">
    <property type="protein sequence ID" value="BAB09416.1"/>
    <property type="molecule type" value="Genomic_DNA"/>
</dbReference>
<dbReference type="EMBL" id="CP002688">
    <property type="protein sequence ID" value="AED91470.1"/>
    <property type="molecule type" value="Genomic_DNA"/>
</dbReference>
<dbReference type="EMBL" id="CP002688">
    <property type="protein sequence ID" value="ANM69269.1"/>
    <property type="molecule type" value="Genomic_DNA"/>
</dbReference>
<dbReference type="SMR" id="Q9FIB2"/>
<dbReference type="FunCoup" id="Q9FIB2">
    <property type="interactions" value="56"/>
</dbReference>
<dbReference type="STRING" id="3702.Q9FIB2"/>
<dbReference type="iPTMnet" id="Q9FIB2"/>
<dbReference type="PaxDb" id="3702-AT5G09950.1"/>
<dbReference type="ProteomicsDB" id="249002"/>
<dbReference type="EnsemblPlants" id="AT5G09950.1">
    <property type="protein sequence ID" value="AT5G09950.1"/>
    <property type="gene ID" value="AT5G09950"/>
</dbReference>
<dbReference type="EnsemblPlants" id="AT5G09950.3">
    <property type="protein sequence ID" value="AT5G09950.3"/>
    <property type="gene ID" value="AT5G09950"/>
</dbReference>
<dbReference type="GeneID" id="830856"/>
<dbReference type="Gramene" id="AT5G09950.1">
    <property type="protein sequence ID" value="AT5G09950.1"/>
    <property type="gene ID" value="AT5G09950"/>
</dbReference>
<dbReference type="Gramene" id="AT5G09950.3">
    <property type="protein sequence ID" value="AT5G09950.3"/>
    <property type="gene ID" value="AT5G09950"/>
</dbReference>
<dbReference type="KEGG" id="ath:AT5G09950"/>
<dbReference type="Araport" id="AT5G09950"/>
<dbReference type="TAIR" id="AT5G09950">
    <property type="gene designation" value="MEF7"/>
</dbReference>
<dbReference type="eggNOG" id="KOG4197">
    <property type="taxonomic scope" value="Eukaryota"/>
</dbReference>
<dbReference type="HOGENOM" id="CLU_002706_15_0_1"/>
<dbReference type="InParanoid" id="Q9FIB2"/>
<dbReference type="PhylomeDB" id="Q9FIB2"/>
<dbReference type="PRO" id="PR:Q9FIB2"/>
<dbReference type="Proteomes" id="UP000006548">
    <property type="component" value="Chromosome 5"/>
</dbReference>
<dbReference type="ExpressionAtlas" id="Q9FIB2">
    <property type="expression patterns" value="baseline and differential"/>
</dbReference>
<dbReference type="GO" id="GO:0003723">
    <property type="term" value="F:RNA binding"/>
    <property type="evidence" value="ECO:0007669"/>
    <property type="project" value="InterPro"/>
</dbReference>
<dbReference type="GO" id="GO:0008270">
    <property type="term" value="F:zinc ion binding"/>
    <property type="evidence" value="ECO:0007669"/>
    <property type="project" value="InterPro"/>
</dbReference>
<dbReference type="GO" id="GO:0009451">
    <property type="term" value="P:RNA modification"/>
    <property type="evidence" value="ECO:0000315"/>
    <property type="project" value="TAIR"/>
</dbReference>
<dbReference type="FunFam" id="1.25.40.10:FF:000366">
    <property type="entry name" value="Pentatricopeptide (PPR) repeat-containing protein"/>
    <property type="match status" value="1"/>
</dbReference>
<dbReference type="FunFam" id="1.25.40.10:FF:000381">
    <property type="entry name" value="Pentatricopeptide repeat-containing protein"/>
    <property type="match status" value="1"/>
</dbReference>
<dbReference type="FunFam" id="1.25.40.10:FF:000569">
    <property type="entry name" value="Pentatricopeptide repeat-containing protein At1g15510, chloroplastic"/>
    <property type="match status" value="1"/>
</dbReference>
<dbReference type="FunFam" id="1.25.40.10:FF:000692">
    <property type="entry name" value="Pentatricopeptide repeat-containing protein At3g13880"/>
    <property type="match status" value="1"/>
</dbReference>
<dbReference type="FunFam" id="1.25.40.10:FF:000425">
    <property type="entry name" value="Pentatricopeptide repeat-containing protein At3g26540"/>
    <property type="match status" value="2"/>
</dbReference>
<dbReference type="FunFam" id="1.25.40.10:FF:000031">
    <property type="entry name" value="Pentatricopeptide repeat-containing protein mitochondrial"/>
    <property type="match status" value="1"/>
</dbReference>
<dbReference type="Gene3D" id="1.25.40.10">
    <property type="entry name" value="Tetratricopeptide repeat domain"/>
    <property type="match status" value="6"/>
</dbReference>
<dbReference type="InterPro" id="IPR032867">
    <property type="entry name" value="DYW_dom"/>
</dbReference>
<dbReference type="InterPro" id="IPR046848">
    <property type="entry name" value="E_motif"/>
</dbReference>
<dbReference type="InterPro" id="IPR046849">
    <property type="entry name" value="Eplus_motif"/>
</dbReference>
<dbReference type="InterPro" id="IPR002885">
    <property type="entry name" value="Pentatricopeptide_rpt"/>
</dbReference>
<dbReference type="InterPro" id="IPR046960">
    <property type="entry name" value="PPR_At4g14850-like_plant"/>
</dbReference>
<dbReference type="InterPro" id="IPR011990">
    <property type="entry name" value="TPR-like_helical_dom_sf"/>
</dbReference>
<dbReference type="NCBIfam" id="TIGR00756">
    <property type="entry name" value="PPR"/>
    <property type="match status" value="5"/>
</dbReference>
<dbReference type="PANTHER" id="PTHR24015">
    <property type="entry name" value="OS07G0578800 PROTEIN-RELATED"/>
    <property type="match status" value="1"/>
</dbReference>
<dbReference type="PANTHER" id="PTHR24015:SF2034">
    <property type="entry name" value="PENTATRICOPEPTIDE REPEAT-CONTAINING PROTEIN-RELATED"/>
    <property type="match status" value="1"/>
</dbReference>
<dbReference type="Pfam" id="PF14432">
    <property type="entry name" value="DYW_deaminase"/>
    <property type="match status" value="1"/>
</dbReference>
<dbReference type="Pfam" id="PF20431">
    <property type="entry name" value="E_motif"/>
    <property type="match status" value="1"/>
</dbReference>
<dbReference type="Pfam" id="PF20430">
    <property type="entry name" value="Eplus_motif"/>
    <property type="match status" value="1"/>
</dbReference>
<dbReference type="Pfam" id="PF01535">
    <property type="entry name" value="PPR"/>
    <property type="match status" value="7"/>
</dbReference>
<dbReference type="Pfam" id="PF13041">
    <property type="entry name" value="PPR_2"/>
    <property type="match status" value="3"/>
</dbReference>
<dbReference type="PROSITE" id="PS51375">
    <property type="entry name" value="PPR"/>
    <property type="match status" value="17"/>
</dbReference>
<sequence>MTNCVPLSFVQSCVGHRGAARFFHSRLYKNRLDKDVYLCNNLINAYLETGDSVSARKVFDEMPLRNCVSWACIVSGYSRNGEHKEALVFLRDMVKEGIFSNQYAFVSVLRACQEIGSVGILFGRQIHGLMFKLSYAVDAVVSNVLISMYWKCIGSVGYALCAFGDIEVKNSVSWNSIISVYSQAGDQRSAFRIFSSMQYDGSRPTEYTFGSLVTTACSLTEPDVRLLEQIMCTIQKSGLLTDLFVGSGLVSAFAKSGSLSYARKVFNQMETRNAVTLNGLMVGLVRQKWGEEATKLFMDMNSMIDVSPESYVILLSSFPEYSLAEEVGLKKGREVHGHVITTGLVDFMVGIGNGLVNMYAKCGSIADARRVFYFMTDKDSVSWNSMITGLDQNGCFIEAVERYKSMRRHDILPGSFTLISSLSSCASLKWAKLGQQIHGESLKLGIDLNVSVSNALMTLYAETGYLNECRKIFSSMPEHDQVSWNSIIGALARSERSLPEAVVCFLNAQRAGQKLNRITFSSVLSAVSSLSFGELGKQIHGLALKNNIADEATTENALIACYGKCGEMDGCEKIFSRMAERRDNVTWNSMISGYIHNELLAKALDLVWFMLQTGQRLDSFMYATVLSAFASVATLERGMEVHACSVRACLESDVVVGSALVDMYSKCGRLDYALRFFNTMPVRNSYSWNSMISGYARHGQGEEALKLFETMKLDGQTPPDHVTFVGVLSACSHAGLLEEGFKHFESMSDSYGLAPRIEHFSCMADVLGRAGELDKLEDFIEKMPMKPNVLIWRTVLGACCRANGRKAELGKKAAEMLFQLEPENAVNYVLLGNMYAAGGRWEDLVKARKKMKDADVKKEAGYSWVTMKDGVHMFVAGDKSHPDADVIYKKLKELNRKMRDAGYVPQTGFALYDLEQENKEEILSYHSEKLAVAFVLAAQRSSTLPIRIMKNLRVCGDCHSAFKYISKIEGRQIILRDSNRFHHFQDGACSCSDFW</sequence>
<comment type="similarity">
    <text evidence="1">Belongs to the PPR family. PCMP-H subfamily.</text>
</comment>
<comment type="online information" name="Pentatricopeptide repeat proteins">
    <link uri="https://ppr.plantenergy.uwa.edu.au"/>
</comment>
<reference key="1">
    <citation type="journal article" date="1998" name="DNA Res.">
        <title>Structural analysis of Arabidopsis thaliana chromosome 5. VIII. Sequence features of the regions of 1,081,958 bp covered by seventeen physically assigned P1 and TAC clones.</title>
        <authorList>
            <person name="Asamizu E."/>
            <person name="Sato S."/>
            <person name="Kaneko T."/>
            <person name="Nakamura Y."/>
            <person name="Kotani H."/>
            <person name="Miyajima N."/>
            <person name="Tabata S."/>
        </authorList>
    </citation>
    <scope>NUCLEOTIDE SEQUENCE [LARGE SCALE GENOMIC DNA]</scope>
    <source>
        <strain>cv. Columbia</strain>
    </source>
</reference>
<reference key="2">
    <citation type="journal article" date="2017" name="Plant J.">
        <title>Araport11: a complete reannotation of the Arabidopsis thaliana reference genome.</title>
        <authorList>
            <person name="Cheng C.Y."/>
            <person name="Krishnakumar V."/>
            <person name="Chan A.P."/>
            <person name="Thibaud-Nissen F."/>
            <person name="Schobel S."/>
            <person name="Town C.D."/>
        </authorList>
    </citation>
    <scope>GENOME REANNOTATION</scope>
    <source>
        <strain>cv. Columbia</strain>
    </source>
</reference>
<reference key="3">
    <citation type="journal article" date="2000" name="Plant Mol. Biol.">
        <title>In Arabidopsis thaliana, 1% of the genome codes for a novel protein family unique to plants.</title>
        <authorList>
            <person name="Aubourg S."/>
            <person name="Boudet N."/>
            <person name="Kreis M."/>
            <person name="Lecharny A."/>
        </authorList>
    </citation>
    <scope>GENE FAMILY</scope>
</reference>
<reference key="4">
    <citation type="journal article" date="2004" name="Plant Cell">
        <title>Genome-wide analysis of Arabidopsis pentatricopeptide repeat proteins reveals their essential role in organelle biogenesis.</title>
        <authorList>
            <person name="Lurin C."/>
            <person name="Andres C."/>
            <person name="Aubourg S."/>
            <person name="Bellaoui M."/>
            <person name="Bitton F."/>
            <person name="Bruyere C."/>
            <person name="Caboche M."/>
            <person name="Debast C."/>
            <person name="Gualberto J."/>
            <person name="Hoffmann B."/>
            <person name="Lecharny A."/>
            <person name="Le Ret M."/>
            <person name="Martin-Magniette M.-L."/>
            <person name="Mireau H."/>
            <person name="Peeters N."/>
            <person name="Renou J.-P."/>
            <person name="Szurek B."/>
            <person name="Taconnat L."/>
            <person name="Small I."/>
        </authorList>
    </citation>
    <scope>GENE FAMILY</scope>
</reference>
<keyword id="KW-1185">Reference proteome</keyword>
<keyword id="KW-0677">Repeat</keyword>